<comment type="function">
    <text evidence="1">Catalyzes the proton-dependent transport of sialic acid.</text>
</comment>
<comment type="catalytic activity">
    <reaction evidence="1">
        <text>N-acetylneuraminate(in) + H(+)(in) = N-acetylneuraminate(out) + H(+)(out)</text>
        <dbReference type="Rhea" id="RHEA:28987"/>
        <dbReference type="ChEBI" id="CHEBI:15378"/>
        <dbReference type="ChEBI" id="CHEBI:35418"/>
    </reaction>
</comment>
<comment type="subcellular location">
    <subcellularLocation>
        <location evidence="1">Cell inner membrane</location>
        <topology evidence="1">Multi-pass membrane protein</topology>
    </subcellularLocation>
</comment>
<comment type="similarity">
    <text evidence="1">Belongs to the major facilitator superfamily. Sialate:H(+) symporter (SHS) (TC 2.A.1.12) family.</text>
</comment>
<proteinExistence type="inferred from homology"/>
<keyword id="KW-0997">Cell inner membrane</keyword>
<keyword id="KW-1003">Cell membrane</keyword>
<keyword id="KW-0472">Membrane</keyword>
<keyword id="KW-0762">Sugar transport</keyword>
<keyword id="KW-0812">Transmembrane</keyword>
<keyword id="KW-1133">Transmembrane helix</keyword>
<keyword id="KW-0813">Transport</keyword>
<name>NANT_ESCF3</name>
<protein>
    <recommendedName>
        <fullName evidence="1">Sialic acid transporter NanT</fullName>
    </recommendedName>
    <alternativeName>
        <fullName evidence="1">Sialic acid permease</fullName>
    </alternativeName>
    <alternativeName>
        <fullName evidence="1">Sialic acid/H(+) symporter</fullName>
    </alternativeName>
</protein>
<evidence type="ECO:0000255" key="1">
    <source>
        <dbReference type="HAMAP-Rule" id="MF_01238"/>
    </source>
</evidence>
<feature type="chain" id="PRO_1000214054" description="Sialic acid transporter NanT">
    <location>
        <begin position="1"/>
        <end position="496"/>
    </location>
</feature>
<feature type="transmembrane region" description="Helical" evidence="1">
    <location>
        <begin position="22"/>
        <end position="42"/>
    </location>
</feature>
<feature type="transmembrane region" description="Helical" evidence="1">
    <location>
        <begin position="58"/>
        <end position="78"/>
    </location>
</feature>
<feature type="transmembrane region" description="Helical" evidence="1">
    <location>
        <begin position="92"/>
        <end position="112"/>
    </location>
</feature>
<feature type="transmembrane region" description="Helical" evidence="1">
    <location>
        <begin position="116"/>
        <end position="136"/>
    </location>
</feature>
<feature type="transmembrane region" description="Helical" evidence="1">
    <location>
        <begin position="148"/>
        <end position="168"/>
    </location>
</feature>
<feature type="transmembrane region" description="Helical" evidence="1">
    <location>
        <begin position="170"/>
        <end position="190"/>
    </location>
</feature>
<feature type="transmembrane region" description="Helical" evidence="1">
    <location>
        <begin position="224"/>
        <end position="244"/>
    </location>
</feature>
<feature type="transmembrane region" description="Helical" evidence="1">
    <location>
        <begin position="247"/>
        <end position="267"/>
    </location>
</feature>
<feature type="transmembrane region" description="Helical" evidence="1">
    <location>
        <begin position="278"/>
        <end position="298"/>
    </location>
</feature>
<feature type="transmembrane region" description="Helical" evidence="1">
    <location>
        <begin position="313"/>
        <end position="333"/>
    </location>
</feature>
<feature type="transmembrane region" description="Helical" evidence="1">
    <location>
        <begin position="353"/>
        <end position="375"/>
    </location>
</feature>
<feature type="transmembrane region" description="Helical" evidence="1">
    <location>
        <begin position="406"/>
        <end position="426"/>
    </location>
</feature>
<feature type="transmembrane region" description="Helical" evidence="1">
    <location>
        <begin position="431"/>
        <end position="451"/>
    </location>
</feature>
<gene>
    <name evidence="1" type="primary">nanT</name>
    <name type="ordered locus">EFER_3195</name>
</gene>
<dbReference type="EMBL" id="CU928158">
    <property type="protein sequence ID" value="CAQ90688.1"/>
    <property type="molecule type" value="Genomic_DNA"/>
</dbReference>
<dbReference type="RefSeq" id="WP_000108485.1">
    <property type="nucleotide sequence ID" value="NC_011740.1"/>
</dbReference>
<dbReference type="SMR" id="B7LRJ2"/>
<dbReference type="GeneID" id="75060187"/>
<dbReference type="KEGG" id="efe:EFER_3195"/>
<dbReference type="HOGENOM" id="CLU_001265_46_8_6"/>
<dbReference type="OrthoDB" id="4474610at2"/>
<dbReference type="Proteomes" id="UP000000745">
    <property type="component" value="Chromosome"/>
</dbReference>
<dbReference type="GO" id="GO:0005886">
    <property type="term" value="C:plasma membrane"/>
    <property type="evidence" value="ECO:0007669"/>
    <property type="project" value="UniProtKB-SubCell"/>
</dbReference>
<dbReference type="GO" id="GO:0046943">
    <property type="term" value="F:carboxylic acid transmembrane transporter activity"/>
    <property type="evidence" value="ECO:0007669"/>
    <property type="project" value="TreeGrafter"/>
</dbReference>
<dbReference type="GO" id="GO:0015538">
    <property type="term" value="F:sialic acid:proton symporter activity"/>
    <property type="evidence" value="ECO:0007669"/>
    <property type="project" value="UniProtKB-UniRule"/>
</dbReference>
<dbReference type="CDD" id="cd17316">
    <property type="entry name" value="MFS_SV2_like"/>
    <property type="match status" value="1"/>
</dbReference>
<dbReference type="FunFam" id="1.20.1250.20:FF:000027">
    <property type="entry name" value="Sialic acid transporter NanT"/>
    <property type="match status" value="1"/>
</dbReference>
<dbReference type="FunFam" id="1.20.1250.20:FF:000038">
    <property type="entry name" value="Sialic acid transporter NanT"/>
    <property type="match status" value="1"/>
</dbReference>
<dbReference type="Gene3D" id="1.20.1250.20">
    <property type="entry name" value="MFS general substrate transporter like domains"/>
    <property type="match status" value="2"/>
</dbReference>
<dbReference type="HAMAP" id="MF_01238">
    <property type="entry name" value="MFS_NanT"/>
    <property type="match status" value="1"/>
</dbReference>
<dbReference type="InterPro" id="IPR011701">
    <property type="entry name" value="MFS"/>
</dbReference>
<dbReference type="InterPro" id="IPR020846">
    <property type="entry name" value="MFS_dom"/>
</dbReference>
<dbReference type="InterPro" id="IPR036259">
    <property type="entry name" value="MFS_trans_sf"/>
</dbReference>
<dbReference type="InterPro" id="IPR004742">
    <property type="entry name" value="SA_transporter"/>
</dbReference>
<dbReference type="NCBIfam" id="TIGR00891">
    <property type="entry name" value="2A0112"/>
    <property type="match status" value="1"/>
</dbReference>
<dbReference type="NCBIfam" id="NF003024">
    <property type="entry name" value="PRK03893.1"/>
    <property type="match status" value="1"/>
</dbReference>
<dbReference type="PANTHER" id="PTHR23508">
    <property type="entry name" value="CARBOXYLIC ACID TRANSPORTER PROTEIN HOMOLOG"/>
    <property type="match status" value="1"/>
</dbReference>
<dbReference type="PANTHER" id="PTHR23508:SF3">
    <property type="entry name" value="SIALIC ACID TRANSPORTER NANT"/>
    <property type="match status" value="1"/>
</dbReference>
<dbReference type="Pfam" id="PF07690">
    <property type="entry name" value="MFS_1"/>
    <property type="match status" value="1"/>
</dbReference>
<dbReference type="SUPFAM" id="SSF103473">
    <property type="entry name" value="MFS general substrate transporter"/>
    <property type="match status" value="1"/>
</dbReference>
<dbReference type="PROSITE" id="PS50850">
    <property type="entry name" value="MFS"/>
    <property type="match status" value="1"/>
</dbReference>
<accession>B7LRJ2</accession>
<sequence>MSTTTQNIPWYRHLNRAQWRAFSAAWLGYLLDGFDFVLIALVLTEVQGEFGLTTVQAASLISAAFISRWFGGLMLGAMGDRYGRRLAMVTSIVLFSVGTLACGFAPGYITMFIARLVIGMGMAGEYGSSATYVIESWPKHLRNKASGFLISGFSVGAVVAAQVYSLVVPLWGWRALFFIGILPIIFALWLRKNIPEAEDWKEKHAGKAPVRTMVDILYRGEHRIANIVMTLAAATALWFCFAGNLQNAAIVAVLGLLCAAIFISFMVQSTGKRWPTGVMLMVVVLFAFLYSWPIQALLPTYLKTELAYNPHTVANVLFFSGFGAAVGCCVGGFLGDWLGTRKAYVCSLLASQLLIIPVFAIGGANVWVLGLLLFFQQMLGQGISGILPKLIGGYFDTDQRAAGLGFTYNVGALGGALAPILGALIAQRLDLGTALGSLSFSLTFVVILLIGLDMPSRVQRWLRPEALRTHDAIDGKPFSGAVPFGSAKNDLVKTKS</sequence>
<organism>
    <name type="scientific">Escherichia fergusonii (strain ATCC 35469 / DSM 13698 / CCUG 18766 / IAM 14443 / JCM 21226 / LMG 7866 / NBRC 102419 / NCTC 12128 / CDC 0568-73)</name>
    <dbReference type="NCBI Taxonomy" id="585054"/>
    <lineage>
        <taxon>Bacteria</taxon>
        <taxon>Pseudomonadati</taxon>
        <taxon>Pseudomonadota</taxon>
        <taxon>Gammaproteobacteria</taxon>
        <taxon>Enterobacterales</taxon>
        <taxon>Enterobacteriaceae</taxon>
        <taxon>Escherichia</taxon>
    </lineage>
</organism>
<reference key="1">
    <citation type="journal article" date="2009" name="PLoS Genet.">
        <title>Organised genome dynamics in the Escherichia coli species results in highly diverse adaptive paths.</title>
        <authorList>
            <person name="Touchon M."/>
            <person name="Hoede C."/>
            <person name="Tenaillon O."/>
            <person name="Barbe V."/>
            <person name="Baeriswyl S."/>
            <person name="Bidet P."/>
            <person name="Bingen E."/>
            <person name="Bonacorsi S."/>
            <person name="Bouchier C."/>
            <person name="Bouvet O."/>
            <person name="Calteau A."/>
            <person name="Chiapello H."/>
            <person name="Clermont O."/>
            <person name="Cruveiller S."/>
            <person name="Danchin A."/>
            <person name="Diard M."/>
            <person name="Dossat C."/>
            <person name="Karoui M.E."/>
            <person name="Frapy E."/>
            <person name="Garry L."/>
            <person name="Ghigo J.M."/>
            <person name="Gilles A.M."/>
            <person name="Johnson J."/>
            <person name="Le Bouguenec C."/>
            <person name="Lescat M."/>
            <person name="Mangenot S."/>
            <person name="Martinez-Jehanne V."/>
            <person name="Matic I."/>
            <person name="Nassif X."/>
            <person name="Oztas S."/>
            <person name="Petit M.A."/>
            <person name="Pichon C."/>
            <person name="Rouy Z."/>
            <person name="Ruf C.S."/>
            <person name="Schneider D."/>
            <person name="Tourret J."/>
            <person name="Vacherie B."/>
            <person name="Vallenet D."/>
            <person name="Medigue C."/>
            <person name="Rocha E.P.C."/>
            <person name="Denamur E."/>
        </authorList>
    </citation>
    <scope>NUCLEOTIDE SEQUENCE [LARGE SCALE GENOMIC DNA]</scope>
    <source>
        <strain>ATCC 35469 / DSM 13698 / BCRC 15582 / CCUG 18766 / IAM 14443 / JCM 21226 / LMG 7866 / NBRC 102419 / NCTC 12128 / CDC 0568-73</strain>
    </source>
</reference>